<accession>B7I5C6</accession>
<feature type="chain" id="PRO_1000192981" description="Phosphoribosylformylglycinamidine cyclo-ligase">
    <location>
        <begin position="1"/>
        <end position="356"/>
    </location>
</feature>
<name>PUR5_ACIB5</name>
<evidence type="ECO:0000255" key="1">
    <source>
        <dbReference type="HAMAP-Rule" id="MF_00741"/>
    </source>
</evidence>
<gene>
    <name evidence="1" type="primary">purM</name>
    <name type="ordered locus">AB57_3014</name>
</gene>
<keyword id="KW-0067">ATP-binding</keyword>
<keyword id="KW-0963">Cytoplasm</keyword>
<keyword id="KW-0436">Ligase</keyword>
<keyword id="KW-0547">Nucleotide-binding</keyword>
<keyword id="KW-0658">Purine biosynthesis</keyword>
<dbReference type="EC" id="6.3.3.1" evidence="1"/>
<dbReference type="EMBL" id="CP001182">
    <property type="protein sequence ID" value="ACJ42353.1"/>
    <property type="molecule type" value="Genomic_DNA"/>
</dbReference>
<dbReference type="RefSeq" id="WP_000071984.1">
    <property type="nucleotide sequence ID" value="NC_011586.2"/>
</dbReference>
<dbReference type="SMR" id="B7I5C6"/>
<dbReference type="GeneID" id="92894879"/>
<dbReference type="KEGG" id="abn:AB57_3014"/>
<dbReference type="HOGENOM" id="CLU_047116_0_0_6"/>
<dbReference type="UniPathway" id="UPA00074">
    <property type="reaction ID" value="UER00129"/>
</dbReference>
<dbReference type="Proteomes" id="UP000007094">
    <property type="component" value="Chromosome"/>
</dbReference>
<dbReference type="GO" id="GO:0005829">
    <property type="term" value="C:cytosol"/>
    <property type="evidence" value="ECO:0007669"/>
    <property type="project" value="TreeGrafter"/>
</dbReference>
<dbReference type="GO" id="GO:0005524">
    <property type="term" value="F:ATP binding"/>
    <property type="evidence" value="ECO:0007669"/>
    <property type="project" value="UniProtKB-KW"/>
</dbReference>
<dbReference type="GO" id="GO:0004637">
    <property type="term" value="F:phosphoribosylamine-glycine ligase activity"/>
    <property type="evidence" value="ECO:0007669"/>
    <property type="project" value="TreeGrafter"/>
</dbReference>
<dbReference type="GO" id="GO:0004641">
    <property type="term" value="F:phosphoribosylformylglycinamidine cyclo-ligase activity"/>
    <property type="evidence" value="ECO:0007669"/>
    <property type="project" value="UniProtKB-UniRule"/>
</dbReference>
<dbReference type="GO" id="GO:0006189">
    <property type="term" value="P:'de novo' IMP biosynthetic process"/>
    <property type="evidence" value="ECO:0007669"/>
    <property type="project" value="UniProtKB-UniRule"/>
</dbReference>
<dbReference type="GO" id="GO:0046084">
    <property type="term" value="P:adenine biosynthetic process"/>
    <property type="evidence" value="ECO:0007669"/>
    <property type="project" value="TreeGrafter"/>
</dbReference>
<dbReference type="CDD" id="cd02196">
    <property type="entry name" value="PurM"/>
    <property type="match status" value="1"/>
</dbReference>
<dbReference type="FunFam" id="3.30.1330.10:FF:000001">
    <property type="entry name" value="Phosphoribosylformylglycinamidine cyclo-ligase"/>
    <property type="match status" value="1"/>
</dbReference>
<dbReference type="FunFam" id="3.90.650.10:FF:000001">
    <property type="entry name" value="Phosphoribosylformylglycinamidine cyclo-ligase"/>
    <property type="match status" value="1"/>
</dbReference>
<dbReference type="Gene3D" id="3.90.650.10">
    <property type="entry name" value="PurM-like C-terminal domain"/>
    <property type="match status" value="1"/>
</dbReference>
<dbReference type="Gene3D" id="3.30.1330.10">
    <property type="entry name" value="PurM-like, N-terminal domain"/>
    <property type="match status" value="1"/>
</dbReference>
<dbReference type="HAMAP" id="MF_00741">
    <property type="entry name" value="AIRS"/>
    <property type="match status" value="1"/>
</dbReference>
<dbReference type="InterPro" id="IPR010918">
    <property type="entry name" value="PurM-like_C_dom"/>
</dbReference>
<dbReference type="InterPro" id="IPR036676">
    <property type="entry name" value="PurM-like_C_sf"/>
</dbReference>
<dbReference type="InterPro" id="IPR016188">
    <property type="entry name" value="PurM-like_N"/>
</dbReference>
<dbReference type="InterPro" id="IPR036921">
    <property type="entry name" value="PurM-like_N_sf"/>
</dbReference>
<dbReference type="InterPro" id="IPR004733">
    <property type="entry name" value="PurM_cligase"/>
</dbReference>
<dbReference type="NCBIfam" id="TIGR00878">
    <property type="entry name" value="purM"/>
    <property type="match status" value="1"/>
</dbReference>
<dbReference type="PANTHER" id="PTHR10520:SF12">
    <property type="entry name" value="TRIFUNCTIONAL PURINE BIOSYNTHETIC PROTEIN ADENOSINE-3"/>
    <property type="match status" value="1"/>
</dbReference>
<dbReference type="PANTHER" id="PTHR10520">
    <property type="entry name" value="TRIFUNCTIONAL PURINE BIOSYNTHETIC PROTEIN ADENOSINE-3-RELATED"/>
    <property type="match status" value="1"/>
</dbReference>
<dbReference type="Pfam" id="PF00586">
    <property type="entry name" value="AIRS"/>
    <property type="match status" value="1"/>
</dbReference>
<dbReference type="Pfam" id="PF02769">
    <property type="entry name" value="AIRS_C"/>
    <property type="match status" value="1"/>
</dbReference>
<dbReference type="SUPFAM" id="SSF56042">
    <property type="entry name" value="PurM C-terminal domain-like"/>
    <property type="match status" value="1"/>
</dbReference>
<dbReference type="SUPFAM" id="SSF55326">
    <property type="entry name" value="PurM N-terminal domain-like"/>
    <property type="match status" value="1"/>
</dbReference>
<sequence>MSNSTSTPNTGLSYKDAGVDIEAGDALVDRIKSVAKRTTRPEVMGGLGGFGALCKIPKGYEEPVLVSGTDGVGTKLRLALNLNRHDTIGQDLVAMCVNDLLVCGAEPLFFLDYYATGHLNVDVAANVVTGIGKGCELAGCALVGGETAEMPGMYEGEDYDLAGFAVGVVEQSKIIDGSKVKSGDVLIGVASSGAHSNGYSLLRKILDVKNVDLTQVIDGRPLADVAMEPTRIYVKPVLELCKQVDVHAMAHITGGGLPGNLPRVLPNGAQAVINEASWEWPELFKLLQREGNVERFEMYRTFNCGVGMVIAVDANDAEKAIEVLNAQGEKAWKIGHIQENAESVEGADEKIRVIFE</sequence>
<proteinExistence type="inferred from homology"/>
<reference key="1">
    <citation type="journal article" date="2008" name="J. Bacteriol.">
        <title>Comparative genome sequence analysis of multidrug-resistant Acinetobacter baumannii.</title>
        <authorList>
            <person name="Adams M.D."/>
            <person name="Goglin K."/>
            <person name="Molyneaux N."/>
            <person name="Hujer K.M."/>
            <person name="Lavender H."/>
            <person name="Jamison J.J."/>
            <person name="MacDonald I.J."/>
            <person name="Martin K.M."/>
            <person name="Russo T."/>
            <person name="Campagnari A.A."/>
            <person name="Hujer A.M."/>
            <person name="Bonomo R.A."/>
            <person name="Gill S.R."/>
        </authorList>
    </citation>
    <scope>NUCLEOTIDE SEQUENCE [LARGE SCALE GENOMIC DNA]</scope>
    <source>
        <strain>AB0057</strain>
    </source>
</reference>
<comment type="catalytic activity">
    <reaction evidence="1">
        <text>2-formamido-N(1)-(5-O-phospho-beta-D-ribosyl)acetamidine + ATP = 5-amino-1-(5-phospho-beta-D-ribosyl)imidazole + ADP + phosphate + H(+)</text>
        <dbReference type="Rhea" id="RHEA:23032"/>
        <dbReference type="ChEBI" id="CHEBI:15378"/>
        <dbReference type="ChEBI" id="CHEBI:30616"/>
        <dbReference type="ChEBI" id="CHEBI:43474"/>
        <dbReference type="ChEBI" id="CHEBI:137981"/>
        <dbReference type="ChEBI" id="CHEBI:147287"/>
        <dbReference type="ChEBI" id="CHEBI:456216"/>
        <dbReference type="EC" id="6.3.3.1"/>
    </reaction>
</comment>
<comment type="pathway">
    <text evidence="1">Purine metabolism; IMP biosynthesis via de novo pathway; 5-amino-1-(5-phospho-D-ribosyl)imidazole from N(2)-formyl-N(1)-(5-phospho-D-ribosyl)glycinamide: step 2/2.</text>
</comment>
<comment type="subcellular location">
    <subcellularLocation>
        <location evidence="1">Cytoplasm</location>
    </subcellularLocation>
</comment>
<comment type="similarity">
    <text evidence="1">Belongs to the AIR synthase family.</text>
</comment>
<protein>
    <recommendedName>
        <fullName evidence="1">Phosphoribosylformylglycinamidine cyclo-ligase</fullName>
        <ecNumber evidence="1">6.3.3.1</ecNumber>
    </recommendedName>
    <alternativeName>
        <fullName evidence="1">AIR synthase</fullName>
    </alternativeName>
    <alternativeName>
        <fullName evidence="1">AIRS</fullName>
    </alternativeName>
    <alternativeName>
        <fullName evidence="1">Phosphoribosyl-aminoimidazole synthetase</fullName>
    </alternativeName>
</protein>
<organism>
    <name type="scientific">Acinetobacter baumannii (strain AB0057)</name>
    <dbReference type="NCBI Taxonomy" id="480119"/>
    <lineage>
        <taxon>Bacteria</taxon>
        <taxon>Pseudomonadati</taxon>
        <taxon>Pseudomonadota</taxon>
        <taxon>Gammaproteobacteria</taxon>
        <taxon>Moraxellales</taxon>
        <taxon>Moraxellaceae</taxon>
        <taxon>Acinetobacter</taxon>
        <taxon>Acinetobacter calcoaceticus/baumannii complex</taxon>
    </lineage>
</organism>